<sequence length="353" mass="38760">MGKKSSDPAVVEINDVDELELEVGEEVTSKKKKKEKEIRTIEDLPGVGPATAEKLREAGFDTLEAIAVASPIELKEVAGISEGAALKIIQAARKAANLGTFMRADEYLKKRESIGRISTGSKSLDKLLGGGIETQAITEVFGEFGSGKTQLAHTLAVMVQLPPEEGGLNGSVIWIDTENTFRPERIREIAKNRGLDPDEVLKHIYVARAFNSNHQMLLVQQAEDKIKELLNTDKPVKLLIVDSLTSHFRSEYIGRGALAERQQKLAKHLADLHRLANLYEIAVFVTNQVQARPDAFFGDPTRPIGGHILAHSATLRVYLRKGKGGKRVARLIDAPHLPEGEAVFRITEKGIED</sequence>
<protein>
    <recommendedName>
        <fullName>DNA repair and recombination protein RadA</fullName>
    </recommendedName>
</protein>
<dbReference type="EMBL" id="AJ248283">
    <property type="protein sequence ID" value="CAB49165.1"/>
    <property type="status" value="ALT_INIT"/>
    <property type="molecule type" value="Genomic_DNA"/>
</dbReference>
<dbReference type="EMBL" id="HE613800">
    <property type="protein sequence ID" value="CCE69617.1"/>
    <property type="molecule type" value="Genomic_DNA"/>
</dbReference>
<dbReference type="PIR" id="F75214">
    <property type="entry name" value="F75214"/>
</dbReference>
<dbReference type="RefSeq" id="WP_048146514.1">
    <property type="nucleotide sequence ID" value="NC_000868.1"/>
</dbReference>
<dbReference type="SMR" id="Q9V233"/>
<dbReference type="STRING" id="272844.PAB0164"/>
<dbReference type="KEGG" id="pab:PAB0164"/>
<dbReference type="PATRIC" id="fig|272844.11.peg.258"/>
<dbReference type="eggNOG" id="arCOG00415">
    <property type="taxonomic scope" value="Archaea"/>
</dbReference>
<dbReference type="HOGENOM" id="CLU_041732_0_0_2"/>
<dbReference type="OrthoDB" id="31129at2157"/>
<dbReference type="Proteomes" id="UP000000810">
    <property type="component" value="Chromosome"/>
</dbReference>
<dbReference type="Proteomes" id="UP000009139">
    <property type="component" value="Chromosome"/>
</dbReference>
<dbReference type="GO" id="GO:0005524">
    <property type="term" value="F:ATP binding"/>
    <property type="evidence" value="ECO:0007669"/>
    <property type="project" value="UniProtKB-UniRule"/>
</dbReference>
<dbReference type="GO" id="GO:0016887">
    <property type="term" value="F:ATP hydrolysis activity"/>
    <property type="evidence" value="ECO:0007669"/>
    <property type="project" value="InterPro"/>
</dbReference>
<dbReference type="GO" id="GO:0140664">
    <property type="term" value="F:ATP-dependent DNA damage sensor activity"/>
    <property type="evidence" value="ECO:0007669"/>
    <property type="project" value="InterPro"/>
</dbReference>
<dbReference type="GO" id="GO:0003684">
    <property type="term" value="F:damaged DNA binding"/>
    <property type="evidence" value="ECO:0007669"/>
    <property type="project" value="UniProtKB-UniRule"/>
</dbReference>
<dbReference type="GO" id="GO:0006310">
    <property type="term" value="P:DNA recombination"/>
    <property type="evidence" value="ECO:0007669"/>
    <property type="project" value="UniProtKB-UniRule"/>
</dbReference>
<dbReference type="GO" id="GO:0006281">
    <property type="term" value="P:DNA repair"/>
    <property type="evidence" value="ECO:0007669"/>
    <property type="project" value="UniProtKB-UniRule"/>
</dbReference>
<dbReference type="CDD" id="cd19515">
    <property type="entry name" value="archRadA"/>
    <property type="match status" value="1"/>
</dbReference>
<dbReference type="FunFam" id="3.40.50.300:FF:002052">
    <property type="entry name" value="DNA repair protein RAD51 homolog"/>
    <property type="match status" value="1"/>
</dbReference>
<dbReference type="Gene3D" id="1.10.150.20">
    <property type="entry name" value="5' to 3' exonuclease, C-terminal subdomain"/>
    <property type="match status" value="1"/>
</dbReference>
<dbReference type="Gene3D" id="3.40.50.300">
    <property type="entry name" value="P-loop containing nucleotide triphosphate hydrolases"/>
    <property type="match status" value="1"/>
</dbReference>
<dbReference type="HAMAP" id="MF_00348">
    <property type="entry name" value="RadA_arch"/>
    <property type="match status" value="1"/>
</dbReference>
<dbReference type="InterPro" id="IPR003593">
    <property type="entry name" value="AAA+_ATPase"/>
</dbReference>
<dbReference type="InterPro" id="IPR013632">
    <property type="entry name" value="DNA_recomb/repair_Rad51_C"/>
</dbReference>
<dbReference type="InterPro" id="IPR011938">
    <property type="entry name" value="DNA_recomb/repair_RadA"/>
</dbReference>
<dbReference type="InterPro" id="IPR016467">
    <property type="entry name" value="DNA_recomb/repair_RecA-like"/>
</dbReference>
<dbReference type="InterPro" id="IPR010995">
    <property type="entry name" value="DNA_repair_Rad51/TF_NusA_a-hlx"/>
</dbReference>
<dbReference type="InterPro" id="IPR003583">
    <property type="entry name" value="Hlx-hairpin-Hlx_DNA-bd_motif"/>
</dbReference>
<dbReference type="InterPro" id="IPR027417">
    <property type="entry name" value="P-loop_NTPase"/>
</dbReference>
<dbReference type="InterPro" id="IPR020588">
    <property type="entry name" value="RecA_ATP-bd"/>
</dbReference>
<dbReference type="InterPro" id="IPR020587">
    <property type="entry name" value="RecA_monomer-monomer_interface"/>
</dbReference>
<dbReference type="NCBIfam" id="NF003301">
    <property type="entry name" value="PRK04301.1"/>
    <property type="match status" value="1"/>
</dbReference>
<dbReference type="NCBIfam" id="TIGR02236">
    <property type="entry name" value="recomb_radA"/>
    <property type="match status" value="1"/>
</dbReference>
<dbReference type="PANTHER" id="PTHR22942:SF30">
    <property type="entry name" value="MEIOTIC RECOMBINATION PROTEIN DMC1_LIM15 HOMOLOG"/>
    <property type="match status" value="1"/>
</dbReference>
<dbReference type="PANTHER" id="PTHR22942">
    <property type="entry name" value="RECA/RAD51/RADA DNA STRAND-PAIRING FAMILY MEMBER"/>
    <property type="match status" value="1"/>
</dbReference>
<dbReference type="Pfam" id="PF14520">
    <property type="entry name" value="HHH_5"/>
    <property type="match status" value="1"/>
</dbReference>
<dbReference type="Pfam" id="PF08423">
    <property type="entry name" value="Rad51"/>
    <property type="match status" value="1"/>
</dbReference>
<dbReference type="PIRSF" id="PIRSF005856">
    <property type="entry name" value="Rad51"/>
    <property type="match status" value="1"/>
</dbReference>
<dbReference type="SMART" id="SM00382">
    <property type="entry name" value="AAA"/>
    <property type="match status" value="1"/>
</dbReference>
<dbReference type="SMART" id="SM00278">
    <property type="entry name" value="HhH1"/>
    <property type="match status" value="2"/>
</dbReference>
<dbReference type="SUPFAM" id="SSF52540">
    <property type="entry name" value="P-loop containing nucleoside triphosphate hydrolases"/>
    <property type="match status" value="1"/>
</dbReference>
<dbReference type="SUPFAM" id="SSF47794">
    <property type="entry name" value="Rad51 N-terminal domain-like"/>
    <property type="match status" value="1"/>
</dbReference>
<dbReference type="PROSITE" id="PS50162">
    <property type="entry name" value="RECA_2"/>
    <property type="match status" value="1"/>
</dbReference>
<dbReference type="PROSITE" id="PS50163">
    <property type="entry name" value="RECA_3"/>
    <property type="match status" value="1"/>
</dbReference>
<reference key="1">
    <citation type="journal article" date="2003" name="Mol. Microbiol.">
        <title>An integrated analysis of the genome of the hyperthermophilic archaeon Pyrococcus abyssi.</title>
        <authorList>
            <person name="Cohen G.N."/>
            <person name="Barbe V."/>
            <person name="Flament D."/>
            <person name="Galperin M."/>
            <person name="Heilig R."/>
            <person name="Lecompte O."/>
            <person name="Poch O."/>
            <person name="Prieur D."/>
            <person name="Querellou J."/>
            <person name="Ripp R."/>
            <person name="Thierry J.-C."/>
            <person name="Van der Oost J."/>
            <person name="Weissenbach J."/>
            <person name="Zivanovic Y."/>
            <person name="Forterre P."/>
        </authorList>
    </citation>
    <scope>NUCLEOTIDE SEQUENCE [LARGE SCALE GENOMIC DNA]</scope>
    <source>
        <strain>GE5 / Orsay</strain>
    </source>
</reference>
<reference key="2">
    <citation type="journal article" date="2012" name="Curr. Microbiol.">
        <title>Re-annotation of two hyperthermophilic archaea Pyrococcus abyssi GE5 and Pyrococcus furiosus DSM 3638.</title>
        <authorList>
            <person name="Gao J."/>
            <person name="Wang J."/>
        </authorList>
    </citation>
    <scope>GENOME REANNOTATION</scope>
    <source>
        <strain>GE5 / Orsay</strain>
    </source>
</reference>
<proteinExistence type="inferred from homology"/>
<keyword id="KW-0067">ATP-binding</keyword>
<keyword id="KW-0227">DNA damage</keyword>
<keyword id="KW-0233">DNA recombination</keyword>
<keyword id="KW-0238">DNA-binding</keyword>
<keyword id="KW-0547">Nucleotide-binding</keyword>
<organism>
    <name type="scientific">Pyrococcus abyssi (strain GE5 / Orsay)</name>
    <dbReference type="NCBI Taxonomy" id="272844"/>
    <lineage>
        <taxon>Archaea</taxon>
        <taxon>Methanobacteriati</taxon>
        <taxon>Methanobacteriota</taxon>
        <taxon>Thermococci</taxon>
        <taxon>Thermococcales</taxon>
        <taxon>Thermococcaceae</taxon>
        <taxon>Pyrococcus</taxon>
    </lineage>
</organism>
<comment type="function">
    <text evidence="1">Involved in DNA repair and in homologous recombination. Binds and assemble on single-stranded DNA to form a nucleoprotein filament. Hydrolyzes ATP in a ssDNA-dependent manner and promotes DNA strand exchange between homologous DNA molecules (By similarity).</text>
</comment>
<comment type="similarity">
    <text evidence="3">Belongs to the eukaryotic RecA-like protein family.</text>
</comment>
<comment type="sequence caution" evidence="3">
    <conflict type="erroneous initiation">
        <sequence resource="EMBL-CDS" id="CAB49165"/>
    </conflict>
    <text>Extended N-terminus.</text>
</comment>
<accession>Q9V233</accession>
<accession>G8ZG76</accession>
<evidence type="ECO:0000250" key="1"/>
<evidence type="ECO:0000255" key="2"/>
<evidence type="ECO:0000305" key="3"/>
<feature type="chain" id="PRO_0000150102" description="DNA repair and recombination protein RadA">
    <location>
        <begin position="1"/>
        <end position="353"/>
    </location>
</feature>
<feature type="binding site" evidence="2">
    <location>
        <begin position="142"/>
        <end position="149"/>
    </location>
    <ligand>
        <name>ATP</name>
        <dbReference type="ChEBI" id="CHEBI:30616"/>
    </ligand>
</feature>
<name>RADA_PYRAB</name>
<gene>
    <name type="primary">radA</name>
    <name type="ordered locus">PYRAB02410</name>
    <name type="ORF">PAB0164</name>
</gene>